<sequence length="557" mass="58959">MSDIEIAQANEATAMWPITKVAAGLGLSEDDLELYGKAKAKLSFSALNALKDKPFGKLVLVTSINPTPAGEGKSTITVGLGDALQQRGKHPVIALREPSLGPVMGMKGGATGGGYAQVVPMEDINLHFTGDMHALTTAVDTLAALIDNHLQQGNTLNIDPRRILWKRALDINDRALRHVTIGLGGPTSGVPREDGFDITVASELMAVLCLAENIADLKARIGRIVIGYTYDRQPVTVADLKVTGAIAMLLRDALKPNLVQTLEHTPAFIHGGPFANIAHGCNSVLATRTALQLGDIAITEAGFGADLGGEKFMDIKTPVLGKTPDAVVIVATVRALKYNGGVALKDLQTENVEALAQGFDNLKRHIHSMQSYGVPVVVAINRFTSDTDAEIQFLIDACAKLNVKAVTATVWADGGRGGLAVADAVLAALDQPAHFTRLYDPQSDVKTKIKTIVQKIYGGADVDYEGKANSALRTIVKNGWQDLPVCMAKTQYSLTDNAKTLGAPEGFTIHVRDIIPKLGAGFLVVMTGSVLTMPGLPKVPAALNMDVTDDGKISGLF</sequence>
<evidence type="ECO:0000255" key="1">
    <source>
        <dbReference type="HAMAP-Rule" id="MF_01543"/>
    </source>
</evidence>
<protein>
    <recommendedName>
        <fullName evidence="1">Formate--tetrahydrofolate ligase</fullName>
        <ecNumber evidence="1">6.3.4.3</ecNumber>
    </recommendedName>
    <alternativeName>
        <fullName evidence="1">Formyltetrahydrofolate synthetase</fullName>
        <shortName evidence="1">FHS</shortName>
        <shortName evidence="1">FTHFS</shortName>
    </alternativeName>
</protein>
<proteinExistence type="inferred from homology"/>
<feature type="chain" id="PRO_0000293038" description="Formate--tetrahydrofolate ligase">
    <location>
        <begin position="1"/>
        <end position="557"/>
    </location>
</feature>
<feature type="binding site" evidence="1">
    <location>
        <begin position="67"/>
        <end position="74"/>
    </location>
    <ligand>
        <name>ATP</name>
        <dbReference type="ChEBI" id="CHEBI:30616"/>
    </ligand>
</feature>
<reference key="1">
    <citation type="journal article" date="2006" name="Proc. Natl. Acad. Sci. U.S.A.">
        <title>Comparative genomics of the lactic acid bacteria.</title>
        <authorList>
            <person name="Makarova K.S."/>
            <person name="Slesarev A."/>
            <person name="Wolf Y.I."/>
            <person name="Sorokin A."/>
            <person name="Mirkin B."/>
            <person name="Koonin E.V."/>
            <person name="Pavlov A."/>
            <person name="Pavlova N."/>
            <person name="Karamychev V."/>
            <person name="Polouchine N."/>
            <person name="Shakhova V."/>
            <person name="Grigoriev I."/>
            <person name="Lou Y."/>
            <person name="Rohksar D."/>
            <person name="Lucas S."/>
            <person name="Huang K."/>
            <person name="Goodstein D.M."/>
            <person name="Hawkins T."/>
            <person name="Plengvidhya V."/>
            <person name="Welker D."/>
            <person name="Hughes J."/>
            <person name="Goh Y."/>
            <person name="Benson A."/>
            <person name="Baldwin K."/>
            <person name="Lee J.-H."/>
            <person name="Diaz-Muniz I."/>
            <person name="Dosti B."/>
            <person name="Smeianov V."/>
            <person name="Wechter W."/>
            <person name="Barabote R."/>
            <person name="Lorca G."/>
            <person name="Altermann E."/>
            <person name="Barrangou R."/>
            <person name="Ganesan B."/>
            <person name="Xie Y."/>
            <person name="Rawsthorne H."/>
            <person name="Tamir D."/>
            <person name="Parker C."/>
            <person name="Breidt F."/>
            <person name="Broadbent J.R."/>
            <person name="Hutkins R."/>
            <person name="O'Sullivan D."/>
            <person name="Steele J."/>
            <person name="Unlu G."/>
            <person name="Saier M.H. Jr."/>
            <person name="Klaenhammer T."/>
            <person name="Richardson P."/>
            <person name="Kozyavkin S."/>
            <person name="Weimer B.C."/>
            <person name="Mills D.A."/>
        </authorList>
    </citation>
    <scope>NUCLEOTIDE SEQUENCE [LARGE SCALE GENOMIC DNA]</scope>
    <source>
        <strain>ATCC 334 / BCRC 17002 / CCUG 31169 / CIP 107868 / KCTC 3260 / NRRL B-441</strain>
    </source>
</reference>
<gene>
    <name evidence="1" type="primary">fhs</name>
    <name type="ordered locus">LSEI_1460</name>
</gene>
<comment type="catalytic activity">
    <reaction evidence="1">
        <text>(6S)-5,6,7,8-tetrahydrofolate + formate + ATP = (6R)-10-formyltetrahydrofolate + ADP + phosphate</text>
        <dbReference type="Rhea" id="RHEA:20221"/>
        <dbReference type="ChEBI" id="CHEBI:15740"/>
        <dbReference type="ChEBI" id="CHEBI:30616"/>
        <dbReference type="ChEBI" id="CHEBI:43474"/>
        <dbReference type="ChEBI" id="CHEBI:57453"/>
        <dbReference type="ChEBI" id="CHEBI:195366"/>
        <dbReference type="ChEBI" id="CHEBI:456216"/>
        <dbReference type="EC" id="6.3.4.3"/>
    </reaction>
</comment>
<comment type="pathway">
    <text evidence="1">One-carbon metabolism; tetrahydrofolate interconversion.</text>
</comment>
<comment type="similarity">
    <text evidence="1">Belongs to the formate--tetrahydrofolate ligase family.</text>
</comment>
<accession>Q038Y4</accession>
<name>FTHS_LACP3</name>
<keyword id="KW-0067">ATP-binding</keyword>
<keyword id="KW-0436">Ligase</keyword>
<keyword id="KW-0547">Nucleotide-binding</keyword>
<keyword id="KW-0554">One-carbon metabolism</keyword>
<keyword id="KW-1185">Reference proteome</keyword>
<dbReference type="EC" id="6.3.4.3" evidence="1"/>
<dbReference type="EMBL" id="CP000423">
    <property type="protein sequence ID" value="ABJ70238.1"/>
    <property type="molecule type" value="Genomic_DNA"/>
</dbReference>
<dbReference type="RefSeq" id="WP_003584453.1">
    <property type="nucleotide sequence ID" value="NC_008526.1"/>
</dbReference>
<dbReference type="RefSeq" id="YP_806680.1">
    <property type="nucleotide sequence ID" value="NC_008526.1"/>
</dbReference>
<dbReference type="SMR" id="Q038Y4"/>
<dbReference type="STRING" id="321967.LSEI_1460"/>
<dbReference type="PaxDb" id="321967-LSEI_1460"/>
<dbReference type="KEGG" id="lca:LSEI_1460"/>
<dbReference type="PATRIC" id="fig|321967.11.peg.1440"/>
<dbReference type="HOGENOM" id="CLU_003601_3_3_9"/>
<dbReference type="UniPathway" id="UPA00193"/>
<dbReference type="Proteomes" id="UP000001651">
    <property type="component" value="Chromosome"/>
</dbReference>
<dbReference type="GO" id="GO:0005524">
    <property type="term" value="F:ATP binding"/>
    <property type="evidence" value="ECO:0007669"/>
    <property type="project" value="UniProtKB-UniRule"/>
</dbReference>
<dbReference type="GO" id="GO:0004329">
    <property type="term" value="F:formate-tetrahydrofolate ligase activity"/>
    <property type="evidence" value="ECO:0007669"/>
    <property type="project" value="UniProtKB-UniRule"/>
</dbReference>
<dbReference type="GO" id="GO:0035999">
    <property type="term" value="P:tetrahydrofolate interconversion"/>
    <property type="evidence" value="ECO:0007669"/>
    <property type="project" value="UniProtKB-UniRule"/>
</dbReference>
<dbReference type="CDD" id="cd00477">
    <property type="entry name" value="FTHFS"/>
    <property type="match status" value="1"/>
</dbReference>
<dbReference type="FunFam" id="3.30.1510.10:FF:000001">
    <property type="entry name" value="Formate--tetrahydrofolate ligase"/>
    <property type="match status" value="1"/>
</dbReference>
<dbReference type="FunFam" id="3.10.410.10:FF:000001">
    <property type="entry name" value="Putative formate--tetrahydrofolate ligase"/>
    <property type="match status" value="1"/>
</dbReference>
<dbReference type="Gene3D" id="3.30.1510.10">
    <property type="entry name" value="Domain 2, N(10)-formyltetrahydrofolate synthetase"/>
    <property type="match status" value="1"/>
</dbReference>
<dbReference type="Gene3D" id="3.10.410.10">
    <property type="entry name" value="Formyltetrahydrofolate synthetase, domain 3"/>
    <property type="match status" value="1"/>
</dbReference>
<dbReference type="Gene3D" id="3.40.50.300">
    <property type="entry name" value="P-loop containing nucleotide triphosphate hydrolases"/>
    <property type="match status" value="1"/>
</dbReference>
<dbReference type="HAMAP" id="MF_01543">
    <property type="entry name" value="FTHFS"/>
    <property type="match status" value="1"/>
</dbReference>
<dbReference type="InterPro" id="IPR000559">
    <property type="entry name" value="Formate_THF_ligase"/>
</dbReference>
<dbReference type="InterPro" id="IPR020628">
    <property type="entry name" value="Formate_THF_ligase_CS"/>
</dbReference>
<dbReference type="InterPro" id="IPR027417">
    <property type="entry name" value="P-loop_NTPase"/>
</dbReference>
<dbReference type="NCBIfam" id="NF010030">
    <property type="entry name" value="PRK13505.1"/>
    <property type="match status" value="1"/>
</dbReference>
<dbReference type="Pfam" id="PF01268">
    <property type="entry name" value="FTHFS"/>
    <property type="match status" value="1"/>
</dbReference>
<dbReference type="SUPFAM" id="SSF52540">
    <property type="entry name" value="P-loop containing nucleoside triphosphate hydrolases"/>
    <property type="match status" value="1"/>
</dbReference>
<dbReference type="PROSITE" id="PS00721">
    <property type="entry name" value="FTHFS_1"/>
    <property type="match status" value="1"/>
</dbReference>
<dbReference type="PROSITE" id="PS00722">
    <property type="entry name" value="FTHFS_2"/>
    <property type="match status" value="1"/>
</dbReference>
<organism>
    <name type="scientific">Lacticaseibacillus paracasei (strain ATCC 334 / BCRC 17002 / CCUG 31169 / CIP 107868 / KCTC 3260 / NRRL B-441)</name>
    <name type="common">Lactobacillus paracasei</name>
    <dbReference type="NCBI Taxonomy" id="321967"/>
    <lineage>
        <taxon>Bacteria</taxon>
        <taxon>Bacillati</taxon>
        <taxon>Bacillota</taxon>
        <taxon>Bacilli</taxon>
        <taxon>Lactobacillales</taxon>
        <taxon>Lactobacillaceae</taxon>
        <taxon>Lacticaseibacillus</taxon>
    </lineage>
</organism>